<sequence>MVGSGVGGVDKVVQPSLKWEGSLWQQGMRRVAGVDEVGRGALAGPVVAAAVILPAHLDPEALSGVRDCKQLRPPQRAHWAERIAQVALAVGIGSASAAEIDQLNIRQATLLAMQRALAQVGEVEHILLDGLPLAELGSRQTALVKGDQLSLSIAAASIVAKVWRDTLMQSWDHQYPGYGWRTNVGYGTQEHRLALQRLGPSPQHRRSFAPLRDLQAGEIGG</sequence>
<reference key="1">
    <citation type="journal article" date="2007" name="ISME J.">
        <title>Population level functional diversity in a microbial community revealed by comparative genomic and metagenomic analyses.</title>
        <authorList>
            <person name="Bhaya D."/>
            <person name="Grossman A.R."/>
            <person name="Steunou A.-S."/>
            <person name="Khuri N."/>
            <person name="Cohan F.M."/>
            <person name="Hamamura N."/>
            <person name="Melendrez M.C."/>
            <person name="Bateson M.M."/>
            <person name="Ward D.M."/>
            <person name="Heidelberg J.F."/>
        </authorList>
    </citation>
    <scope>NUCLEOTIDE SEQUENCE [LARGE SCALE GENOMIC DNA]</scope>
    <source>
        <strain>JA-3-3Ab</strain>
    </source>
</reference>
<gene>
    <name evidence="1" type="primary">rnhB</name>
    <name type="ordered locus">CYA_0822</name>
</gene>
<name>RNH2_SYNJA</name>
<dbReference type="EC" id="3.1.26.4" evidence="1"/>
<dbReference type="EMBL" id="CP000239">
    <property type="protein sequence ID" value="ABC99027.1"/>
    <property type="molecule type" value="Genomic_DNA"/>
</dbReference>
<dbReference type="RefSeq" id="WP_011429711.1">
    <property type="nucleotide sequence ID" value="NC_007775.1"/>
</dbReference>
<dbReference type="SMR" id="Q2JW45"/>
<dbReference type="STRING" id="321327.CYA_0822"/>
<dbReference type="KEGG" id="cya:CYA_0822"/>
<dbReference type="eggNOG" id="COG0164">
    <property type="taxonomic scope" value="Bacteria"/>
</dbReference>
<dbReference type="HOGENOM" id="CLU_036532_2_1_3"/>
<dbReference type="OrthoDB" id="9803420at2"/>
<dbReference type="Proteomes" id="UP000008818">
    <property type="component" value="Chromosome"/>
</dbReference>
<dbReference type="GO" id="GO:0005737">
    <property type="term" value="C:cytoplasm"/>
    <property type="evidence" value="ECO:0007669"/>
    <property type="project" value="UniProtKB-SubCell"/>
</dbReference>
<dbReference type="GO" id="GO:0032299">
    <property type="term" value="C:ribonuclease H2 complex"/>
    <property type="evidence" value="ECO:0007669"/>
    <property type="project" value="TreeGrafter"/>
</dbReference>
<dbReference type="GO" id="GO:0030145">
    <property type="term" value="F:manganese ion binding"/>
    <property type="evidence" value="ECO:0007669"/>
    <property type="project" value="UniProtKB-UniRule"/>
</dbReference>
<dbReference type="GO" id="GO:0003723">
    <property type="term" value="F:RNA binding"/>
    <property type="evidence" value="ECO:0007669"/>
    <property type="project" value="InterPro"/>
</dbReference>
<dbReference type="GO" id="GO:0004523">
    <property type="term" value="F:RNA-DNA hybrid ribonuclease activity"/>
    <property type="evidence" value="ECO:0007669"/>
    <property type="project" value="UniProtKB-UniRule"/>
</dbReference>
<dbReference type="GO" id="GO:0043137">
    <property type="term" value="P:DNA replication, removal of RNA primer"/>
    <property type="evidence" value="ECO:0007669"/>
    <property type="project" value="TreeGrafter"/>
</dbReference>
<dbReference type="GO" id="GO:0006298">
    <property type="term" value="P:mismatch repair"/>
    <property type="evidence" value="ECO:0007669"/>
    <property type="project" value="TreeGrafter"/>
</dbReference>
<dbReference type="CDD" id="cd07182">
    <property type="entry name" value="RNase_HII_bacteria_HII_like"/>
    <property type="match status" value="1"/>
</dbReference>
<dbReference type="Gene3D" id="3.30.420.10">
    <property type="entry name" value="Ribonuclease H-like superfamily/Ribonuclease H"/>
    <property type="match status" value="1"/>
</dbReference>
<dbReference type="HAMAP" id="MF_00052_B">
    <property type="entry name" value="RNase_HII_B"/>
    <property type="match status" value="1"/>
</dbReference>
<dbReference type="InterPro" id="IPR022898">
    <property type="entry name" value="RNase_HII"/>
</dbReference>
<dbReference type="InterPro" id="IPR001352">
    <property type="entry name" value="RNase_HII/HIII"/>
</dbReference>
<dbReference type="InterPro" id="IPR024567">
    <property type="entry name" value="RNase_HII/HIII_dom"/>
</dbReference>
<dbReference type="InterPro" id="IPR012337">
    <property type="entry name" value="RNaseH-like_sf"/>
</dbReference>
<dbReference type="InterPro" id="IPR036397">
    <property type="entry name" value="RNaseH_sf"/>
</dbReference>
<dbReference type="NCBIfam" id="NF000595">
    <property type="entry name" value="PRK00015.1-3"/>
    <property type="match status" value="1"/>
</dbReference>
<dbReference type="PANTHER" id="PTHR10954">
    <property type="entry name" value="RIBONUCLEASE H2 SUBUNIT A"/>
    <property type="match status" value="1"/>
</dbReference>
<dbReference type="PANTHER" id="PTHR10954:SF18">
    <property type="entry name" value="RIBONUCLEASE HII"/>
    <property type="match status" value="1"/>
</dbReference>
<dbReference type="Pfam" id="PF01351">
    <property type="entry name" value="RNase_HII"/>
    <property type="match status" value="1"/>
</dbReference>
<dbReference type="SUPFAM" id="SSF53098">
    <property type="entry name" value="Ribonuclease H-like"/>
    <property type="match status" value="1"/>
</dbReference>
<dbReference type="PROSITE" id="PS51975">
    <property type="entry name" value="RNASE_H_2"/>
    <property type="match status" value="1"/>
</dbReference>
<proteinExistence type="inferred from homology"/>
<organism>
    <name type="scientific">Synechococcus sp. (strain JA-3-3Ab)</name>
    <name type="common">Cyanobacteria bacterium Yellowstone A-Prime</name>
    <dbReference type="NCBI Taxonomy" id="321327"/>
    <lineage>
        <taxon>Bacteria</taxon>
        <taxon>Bacillati</taxon>
        <taxon>Cyanobacteriota</taxon>
        <taxon>Cyanophyceae</taxon>
        <taxon>Synechococcales</taxon>
        <taxon>Synechococcaceae</taxon>
        <taxon>Synechococcus</taxon>
    </lineage>
</organism>
<keyword id="KW-0963">Cytoplasm</keyword>
<keyword id="KW-0255">Endonuclease</keyword>
<keyword id="KW-0378">Hydrolase</keyword>
<keyword id="KW-0464">Manganese</keyword>
<keyword id="KW-0479">Metal-binding</keyword>
<keyword id="KW-0540">Nuclease</keyword>
<comment type="function">
    <text evidence="1">Endonuclease that specifically degrades the RNA of RNA-DNA hybrids.</text>
</comment>
<comment type="catalytic activity">
    <reaction evidence="1">
        <text>Endonucleolytic cleavage to 5'-phosphomonoester.</text>
        <dbReference type="EC" id="3.1.26.4"/>
    </reaction>
</comment>
<comment type="cofactor">
    <cofactor evidence="1">
        <name>Mn(2+)</name>
        <dbReference type="ChEBI" id="CHEBI:29035"/>
    </cofactor>
    <cofactor evidence="1">
        <name>Mg(2+)</name>
        <dbReference type="ChEBI" id="CHEBI:18420"/>
    </cofactor>
    <text evidence="1">Manganese or magnesium. Binds 1 divalent metal ion per monomer in the absence of substrate. May bind a second metal ion after substrate binding.</text>
</comment>
<comment type="subcellular location">
    <subcellularLocation>
        <location evidence="1">Cytoplasm</location>
    </subcellularLocation>
</comment>
<comment type="similarity">
    <text evidence="1">Belongs to the RNase HII family.</text>
</comment>
<feature type="chain" id="PRO_0000235781" description="Ribonuclease HII">
    <location>
        <begin position="1"/>
        <end position="221"/>
    </location>
</feature>
<feature type="domain" description="RNase H type-2" evidence="2">
    <location>
        <begin position="29"/>
        <end position="220"/>
    </location>
</feature>
<feature type="region of interest" description="Disordered" evidence="3">
    <location>
        <begin position="198"/>
        <end position="221"/>
    </location>
</feature>
<feature type="binding site" evidence="1">
    <location>
        <position position="35"/>
    </location>
    <ligand>
        <name>a divalent metal cation</name>
        <dbReference type="ChEBI" id="CHEBI:60240"/>
    </ligand>
</feature>
<feature type="binding site" evidence="1">
    <location>
        <position position="36"/>
    </location>
    <ligand>
        <name>a divalent metal cation</name>
        <dbReference type="ChEBI" id="CHEBI:60240"/>
    </ligand>
</feature>
<feature type="binding site" evidence="1">
    <location>
        <position position="129"/>
    </location>
    <ligand>
        <name>a divalent metal cation</name>
        <dbReference type="ChEBI" id="CHEBI:60240"/>
    </ligand>
</feature>
<protein>
    <recommendedName>
        <fullName evidence="1">Ribonuclease HII</fullName>
        <shortName evidence="1">RNase HII</shortName>
        <ecNumber evidence="1">3.1.26.4</ecNumber>
    </recommendedName>
</protein>
<evidence type="ECO:0000255" key="1">
    <source>
        <dbReference type="HAMAP-Rule" id="MF_00052"/>
    </source>
</evidence>
<evidence type="ECO:0000255" key="2">
    <source>
        <dbReference type="PROSITE-ProRule" id="PRU01319"/>
    </source>
</evidence>
<evidence type="ECO:0000256" key="3">
    <source>
        <dbReference type="SAM" id="MobiDB-lite"/>
    </source>
</evidence>
<accession>Q2JW45</accession>